<sequence>MILYEYPFNERIRTLLRLEDLFERFTFFVAQEDAREHHVALTTLFEISEVAGRADLKSDLMKELERQRQTLAPFRGNPGIEQNALEAVLGEIEQTLANLAQMQGKTGQHLIDNEWLASIRSRAVIPGGTCKFDLPSYYAWQQWPAEQRRHDIAKWAMPLLPLRDAAMIVLRLARESGQASKVMAMQGSYQQMLSGRTYQLMQVRVPPELRVIPEASANKYMLWVRFTAQDGDVRPRAVDIDVPFQLTLCNL</sequence>
<feature type="chain" id="PRO_1000064899" description="Cell division protein ZapD">
    <location>
        <begin position="1"/>
        <end position="251"/>
    </location>
</feature>
<proteinExistence type="inferred from homology"/>
<name>ZAPD_BURP6</name>
<organism>
    <name type="scientific">Burkholderia pseudomallei (strain 668)</name>
    <dbReference type="NCBI Taxonomy" id="320373"/>
    <lineage>
        <taxon>Bacteria</taxon>
        <taxon>Pseudomonadati</taxon>
        <taxon>Pseudomonadota</taxon>
        <taxon>Betaproteobacteria</taxon>
        <taxon>Burkholderiales</taxon>
        <taxon>Burkholderiaceae</taxon>
        <taxon>Burkholderia</taxon>
        <taxon>pseudomallei group</taxon>
    </lineage>
</organism>
<reference key="1">
    <citation type="journal article" date="2010" name="Genome Biol. Evol.">
        <title>Continuing evolution of Burkholderia mallei through genome reduction and large-scale rearrangements.</title>
        <authorList>
            <person name="Losada L."/>
            <person name="Ronning C.M."/>
            <person name="DeShazer D."/>
            <person name="Woods D."/>
            <person name="Fedorova N."/>
            <person name="Kim H.S."/>
            <person name="Shabalina S.A."/>
            <person name="Pearson T.R."/>
            <person name="Brinkac L."/>
            <person name="Tan P."/>
            <person name="Nandi T."/>
            <person name="Crabtree J."/>
            <person name="Badger J."/>
            <person name="Beckstrom-Sternberg S."/>
            <person name="Saqib M."/>
            <person name="Schutzer S.E."/>
            <person name="Keim P."/>
            <person name="Nierman W.C."/>
        </authorList>
    </citation>
    <scope>NUCLEOTIDE SEQUENCE [LARGE SCALE GENOMIC DNA]</scope>
    <source>
        <strain>668</strain>
    </source>
</reference>
<accession>A3NDU9</accession>
<comment type="function">
    <text evidence="1">Cell division factor that enhances FtsZ-ring assembly. Directly interacts with FtsZ and promotes bundling of FtsZ protofilaments, with a reduction in FtsZ GTPase activity.</text>
</comment>
<comment type="subunit">
    <text evidence="1">Interacts with FtsZ.</text>
</comment>
<comment type="subcellular location">
    <subcellularLocation>
        <location evidence="1">Cytoplasm</location>
    </subcellularLocation>
    <text evidence="1">Localizes to mid-cell in an FtsZ-dependent manner.</text>
</comment>
<comment type="similarity">
    <text evidence="1">Belongs to the ZapD family.</text>
</comment>
<gene>
    <name evidence="1" type="primary">zapD</name>
    <name type="ordered locus">BURPS668_3510</name>
</gene>
<protein>
    <recommendedName>
        <fullName evidence="1">Cell division protein ZapD</fullName>
    </recommendedName>
    <alternativeName>
        <fullName evidence="1">Z ring-associated protein D</fullName>
    </alternativeName>
</protein>
<keyword id="KW-0131">Cell cycle</keyword>
<keyword id="KW-0132">Cell division</keyword>
<keyword id="KW-0963">Cytoplasm</keyword>
<keyword id="KW-0717">Septation</keyword>
<dbReference type="EMBL" id="CP000570">
    <property type="protein sequence ID" value="ABN82446.1"/>
    <property type="molecule type" value="Genomic_DNA"/>
</dbReference>
<dbReference type="RefSeq" id="WP_004195118.1">
    <property type="nucleotide sequence ID" value="NC_009074.1"/>
</dbReference>
<dbReference type="SMR" id="A3NDU9"/>
<dbReference type="GeneID" id="93061613"/>
<dbReference type="KEGG" id="bpd:BURPS668_3510"/>
<dbReference type="HOGENOM" id="CLU_076303_0_1_4"/>
<dbReference type="GO" id="GO:0032153">
    <property type="term" value="C:cell division site"/>
    <property type="evidence" value="ECO:0007669"/>
    <property type="project" value="TreeGrafter"/>
</dbReference>
<dbReference type="GO" id="GO:0005737">
    <property type="term" value="C:cytoplasm"/>
    <property type="evidence" value="ECO:0007669"/>
    <property type="project" value="UniProtKB-SubCell"/>
</dbReference>
<dbReference type="GO" id="GO:0000917">
    <property type="term" value="P:division septum assembly"/>
    <property type="evidence" value="ECO:0007669"/>
    <property type="project" value="UniProtKB-KW"/>
</dbReference>
<dbReference type="GO" id="GO:0043093">
    <property type="term" value="P:FtsZ-dependent cytokinesis"/>
    <property type="evidence" value="ECO:0007669"/>
    <property type="project" value="UniProtKB-UniRule"/>
</dbReference>
<dbReference type="Gene3D" id="1.10.3900.10">
    <property type="entry name" value="YacF-like"/>
    <property type="match status" value="1"/>
</dbReference>
<dbReference type="Gene3D" id="2.60.440.10">
    <property type="entry name" value="YacF-like domains"/>
    <property type="match status" value="1"/>
</dbReference>
<dbReference type="HAMAP" id="MF_01092">
    <property type="entry name" value="ZapD"/>
    <property type="match status" value="1"/>
</dbReference>
<dbReference type="InterPro" id="IPR009777">
    <property type="entry name" value="ZapD"/>
</dbReference>
<dbReference type="InterPro" id="IPR027462">
    <property type="entry name" value="ZapD_C"/>
</dbReference>
<dbReference type="InterPro" id="IPR036268">
    <property type="entry name" value="ZapD_sf"/>
</dbReference>
<dbReference type="NCBIfam" id="NF003656">
    <property type="entry name" value="PRK05287.1-4"/>
    <property type="match status" value="1"/>
</dbReference>
<dbReference type="PANTHER" id="PTHR39455">
    <property type="entry name" value="CELL DIVISION PROTEIN ZAPD"/>
    <property type="match status" value="1"/>
</dbReference>
<dbReference type="PANTHER" id="PTHR39455:SF1">
    <property type="entry name" value="CELL DIVISION PROTEIN ZAPD"/>
    <property type="match status" value="1"/>
</dbReference>
<dbReference type="Pfam" id="PF07072">
    <property type="entry name" value="ZapD"/>
    <property type="match status" value="1"/>
</dbReference>
<dbReference type="SUPFAM" id="SSF160950">
    <property type="entry name" value="YacF-like"/>
    <property type="match status" value="1"/>
</dbReference>
<evidence type="ECO:0000255" key="1">
    <source>
        <dbReference type="HAMAP-Rule" id="MF_01092"/>
    </source>
</evidence>